<proteinExistence type="evidence at protein level"/>
<evidence type="ECO:0000250" key="1"/>
<evidence type="ECO:0000255" key="2"/>
<evidence type="ECO:0000269" key="3">
    <source>
    </source>
</evidence>
<evidence type="ECO:0000269" key="4">
    <source>
    </source>
</evidence>
<evidence type="ECO:0000269" key="5">
    <source>
    </source>
</evidence>
<evidence type="ECO:0000269" key="6">
    <source>
    </source>
</evidence>
<evidence type="ECO:0000269" key="7">
    <source>
    </source>
</evidence>
<evidence type="ECO:0000269" key="8">
    <source>
    </source>
</evidence>
<evidence type="ECO:0000303" key="9">
    <source>
    </source>
</evidence>
<evidence type="ECO:0000303" key="10">
    <source ref="3"/>
</evidence>
<evidence type="ECO:0000305" key="11"/>
<sequence length="217" mass="24906">MSKGRAEAAAGAAGILLRYLQEQNRPYSSQDVFGNLQREHGLGKAVVVKTLEQLAQQGKIKEKMYGKQKIYFADQDQFDMVSDADLQVLDGKIVALTAKVQSLQQSCRYMEAELKELSSALTTPEMQKEIQELKKECAGYRERLKNIKAATNHVTPEEKEQVYRERQKYCKEWRKRKRMATELSDAILEGYPKSKKQFFEEVGIETDEDYNVTLPDP</sequence>
<comment type="function">
    <text evidence="3 5 7">Plays an important role in meiotic recombination. Stimulates DMC1-mediated strand exchange required for pairing homologous chromosomes during meiosis. The complex PSMC3IP/MND1 binds DNA, stimulates the recombinase activity of DMC1 as well as DMC1 D-loop formation from double-strand DNA. This complex stabilizes presynaptic RAD51 and DMC1 filaments formed on single strand DNA to capture double-strand DNA. This complex stimulates both synaptic and presynaptic critical steps in RAD51 and DMC1-promoted homologous pairing. May inhibit HIV-1 viral protein TAT activity and modulate the activity of proteasomes through association with PSMC3. Acts as a tissue specific coactivator of hormone-dependent transcription mediated by nuclear receptors.</text>
</comment>
<comment type="subunit">
    <text evidence="1 3 5">Interacts with the DNA-binding domain of the nuclear receptors NR3C1/GR, ESR2/ER-beta, THRB and RXRA (By similarity). Forms a stable heterodimer with MND1. Interacts with PSMC3/TBP1.</text>
</comment>
<comment type="interaction">
    <interactant intactId="EBI-9057595">
        <id>Q9P2W1</id>
    </interactant>
    <interactant intactId="EBI-11137441">
        <id>Q9BWT6</id>
        <label>MND1</label>
    </interactant>
    <organismsDiffer>false</organismsDiffer>
    <experiments>8</experiments>
</comment>
<comment type="subcellular location">
    <subcellularLocation>
        <location evidence="4">Nucleus</location>
    </subcellularLocation>
</comment>
<comment type="alternative products">
    <event type="alternative splicing"/>
    <isoform>
        <id>Q9P2W1-1</id>
        <name>1</name>
        <sequence type="displayed"/>
    </isoform>
    <isoform>
        <id>Q9P2W1-2</id>
        <name>2</name>
        <sequence type="described" ref="VSP_030213"/>
    </isoform>
    <isoform>
        <id>Q9P2W1-3</id>
        <name>3</name>
        <sequence type="described" ref="VSP_047716"/>
    </isoform>
</comment>
<comment type="tissue specificity">
    <text evidence="4 8">Highly expressed in testis and colon.</text>
</comment>
<comment type="induction">
    <text evidence="6">Overexpressed in leiomyomas compared to myometrium.</text>
</comment>
<comment type="PTM">
    <text evidence="1">PTM: Phosphorylated by PKA, PKC and MAPK.</text>
</comment>
<comment type="disease" evidence="7">
    <disease id="DI-03287">
        <name>Ovarian dysgenesis 3</name>
        <acronym>ODG3</acronym>
        <description>A disorder characterized by lack of spontaneous pubertal development, primary amenorrhea, uterine hypoplasia, and hypergonadotropic hypogonadism as a result of streak gonads.</description>
        <dbReference type="MIM" id="614324"/>
    </disease>
    <text>The disease is caused by variants affecting the gene represented in this entry.</text>
</comment>
<comment type="similarity">
    <text evidence="11">Belongs to the HOP2 family.</text>
</comment>
<comment type="sequence caution" evidence="11">
    <conflict type="frameshift">
        <sequence resource="EMBL-CDS" id="AAC41915"/>
    </conflict>
</comment>
<gene>
    <name type="primary">PSMC3IP</name>
    <name type="synonym">HOP2</name>
    <name type="synonym">TBPIP</name>
</gene>
<protein>
    <recommendedName>
        <fullName>Homologous-pairing protein 2 homolog</fullName>
    </recommendedName>
    <alternativeName>
        <fullName>Nuclear receptor coactivator GT198</fullName>
    </alternativeName>
    <alternativeName>
        <fullName>PSMC3-interacting protein</fullName>
    </alternativeName>
    <alternativeName>
        <fullName>Proteasome 26S ATPase subunit 3-interacting protein</fullName>
    </alternativeName>
    <alternativeName>
        <fullName>Tat-binding protein 1-interacting protein</fullName>
        <shortName>TBP-1-interacting protein</shortName>
    </alternativeName>
</protein>
<reference key="1">
    <citation type="journal article" date="1995" name="Genomics">
        <title>Generation of a transcription map at the HSD17B locus centromeric to BRCA1 at 17q21.</title>
        <authorList>
            <person name="Rommens J.M."/>
            <person name="Durocher F."/>
            <person name="McArthur J."/>
            <person name="Tonin P."/>
            <person name="Leblanc J.-F."/>
            <person name="Allen T."/>
            <person name="Samson C."/>
            <person name="Ferri L."/>
            <person name="Narod S."/>
            <person name="Morgan K."/>
            <person name="Simard J."/>
        </authorList>
    </citation>
    <scope>NUCLEOTIDE SEQUENCE [MRNA] (ISOFORM 1)</scope>
    <scope>TISSUE SPECIFICITY</scope>
</reference>
<reference key="2">
    <citation type="journal article" date="2000" name="Gene">
        <title>Molecular cloning and characterization of a human homologue of TBPIP, a BRCA1 locus-related gene.</title>
        <authorList>
            <person name="Ijichi H."/>
            <person name="Tanaka T."/>
            <person name="Nakamura T."/>
            <person name="Yagi H."/>
            <person name="Hakuba A."/>
            <person name="Sato M."/>
        </authorList>
    </citation>
    <scope>NUCLEOTIDE SEQUENCE [MRNA] (ISOFORM 1)</scope>
    <scope>FUNCTION</scope>
    <scope>INTERACTION WITH PSMC3</scope>
</reference>
<reference key="3">
    <citation type="submission" date="2009-08" db="EMBL/GenBank/DDBJ databases">
        <title>Alternative splicing of GT198 in the BRCA1 locus.</title>
        <authorList>
            <person name="Peng M."/>
            <person name="Ko L."/>
        </authorList>
    </citation>
    <scope>NUCLEOTIDE SEQUENCE [MRNA] (ISOFORM 3)</scope>
    <scope>ALTERNATIVE SPLICING</scope>
</reference>
<reference key="4">
    <citation type="journal article" date="2006" name="Nature">
        <title>DNA sequence of human chromosome 17 and analysis of rearrangement in the human lineage.</title>
        <authorList>
            <person name="Zody M.C."/>
            <person name="Garber M."/>
            <person name="Adams D.J."/>
            <person name="Sharpe T."/>
            <person name="Harrow J."/>
            <person name="Lupski J.R."/>
            <person name="Nicholson C."/>
            <person name="Searle S.M."/>
            <person name="Wilming L."/>
            <person name="Young S.K."/>
            <person name="Abouelleil A."/>
            <person name="Allen N.R."/>
            <person name="Bi W."/>
            <person name="Bloom T."/>
            <person name="Borowsky M.L."/>
            <person name="Bugalter B.E."/>
            <person name="Butler J."/>
            <person name="Chang J.L."/>
            <person name="Chen C.-K."/>
            <person name="Cook A."/>
            <person name="Corum B."/>
            <person name="Cuomo C.A."/>
            <person name="de Jong P.J."/>
            <person name="DeCaprio D."/>
            <person name="Dewar K."/>
            <person name="FitzGerald M."/>
            <person name="Gilbert J."/>
            <person name="Gibson R."/>
            <person name="Gnerre S."/>
            <person name="Goldstein S."/>
            <person name="Grafham D.V."/>
            <person name="Grocock R."/>
            <person name="Hafez N."/>
            <person name="Hagopian D.S."/>
            <person name="Hart E."/>
            <person name="Norman C.H."/>
            <person name="Humphray S."/>
            <person name="Jaffe D.B."/>
            <person name="Jones M."/>
            <person name="Kamal M."/>
            <person name="Khodiyar V.K."/>
            <person name="LaButti K."/>
            <person name="Laird G."/>
            <person name="Lehoczky J."/>
            <person name="Liu X."/>
            <person name="Lokyitsang T."/>
            <person name="Loveland J."/>
            <person name="Lui A."/>
            <person name="Macdonald P."/>
            <person name="Major J.E."/>
            <person name="Matthews L."/>
            <person name="Mauceli E."/>
            <person name="McCarroll S.A."/>
            <person name="Mihalev A.H."/>
            <person name="Mudge J."/>
            <person name="Nguyen C."/>
            <person name="Nicol R."/>
            <person name="O'Leary S.B."/>
            <person name="Osoegawa K."/>
            <person name="Schwartz D.C."/>
            <person name="Shaw-Smith C."/>
            <person name="Stankiewicz P."/>
            <person name="Steward C."/>
            <person name="Swarbreck D."/>
            <person name="Venkataraman V."/>
            <person name="Whittaker C.A."/>
            <person name="Yang X."/>
            <person name="Zimmer A.R."/>
            <person name="Bradley A."/>
            <person name="Hubbard T."/>
            <person name="Birren B.W."/>
            <person name="Rogers J."/>
            <person name="Lander E.S."/>
            <person name="Nusbaum C."/>
        </authorList>
    </citation>
    <scope>NUCLEOTIDE SEQUENCE [LARGE SCALE GENOMIC DNA]</scope>
</reference>
<reference key="5">
    <citation type="journal article" date="2002" name="Mol. Cell. Biol.">
        <title>Identification and characterization of a tissue-specific coactivator, GT198, that interacts with the DNA-binding domains of nuclear receptors.</title>
        <authorList>
            <person name="Ko L."/>
            <person name="Cardona G.R."/>
            <person name="Henrion-Caude A."/>
            <person name="Chin W.W."/>
        </authorList>
    </citation>
    <scope>NUCLEOTIDE SEQUENCE [MRNA] (ISOFORM 1)</scope>
    <scope>TISSUE SPECIFICITY</scope>
    <scope>SUBCELLULAR LOCATION</scope>
</reference>
<reference key="6">
    <citation type="journal article" date="2004" name="Genome Res.">
        <title>The status, quality, and expansion of the NIH full-length cDNA project: the Mammalian Gene Collection (MGC).</title>
        <authorList>
            <consortium name="The MGC Project Team"/>
        </authorList>
    </citation>
    <scope>NUCLEOTIDE SEQUENCE [LARGE SCALE MRNA] (ISOFORM 2)</scope>
    <source>
        <tissue>Uterus</tissue>
    </source>
</reference>
<reference key="7">
    <citation type="journal article" date="2006" name="J. Biol. Chem.">
        <title>Stimulation of DNA strand exchange by the human TBPIP/Hop2-Mnd1 complex.</title>
        <authorList>
            <person name="Enomoto R."/>
            <person name="Kinebuchi T."/>
            <person name="Sato M."/>
            <person name="Yagi H."/>
            <person name="Kurumizaka H."/>
            <person name="Yokoyama S."/>
        </authorList>
    </citation>
    <scope>INTERACTION WITH MND1</scope>
    <scope>FUNCTION</scope>
</reference>
<reference key="8">
    <citation type="journal article" date="2007" name="Reprod. Biol. Endocrinol.">
        <title>Genomic and proteomic profiling I: leiomyomas in African Americans and Caucasians.</title>
        <authorList>
            <person name="Pan Q."/>
            <person name="Luo X."/>
            <person name="Chegini N."/>
        </authorList>
    </citation>
    <scope>INDUCTION</scope>
</reference>
<reference key="9">
    <citation type="journal article" date="2011" name="Am. J. Hum. Genet.">
        <title>XX ovarian dysgenesis is caused by a PSMC3IP/HOP2 mutation that abolishes coactivation of estrogen-driven transcription.</title>
        <authorList>
            <person name="Zangen D."/>
            <person name="Kaufman Y."/>
            <person name="Zeligson S."/>
            <person name="Perlberg S."/>
            <person name="Fridman H."/>
            <person name="Kanaan M."/>
            <person name="Abdulhadi-Atwan M."/>
            <person name="Abu Libdeh A."/>
            <person name="Gussow A."/>
            <person name="Kisslov I."/>
            <person name="Carmel L."/>
            <person name="Renbaum P."/>
            <person name="Levy-Lahad E."/>
        </authorList>
    </citation>
    <scope>FUNCTION</scope>
    <scope>VARIANT ODG3 GLU-201 DEL</scope>
    <scope>CHARACTERIZATION OF VARIANT ODG3 GLU-201 DEL</scope>
</reference>
<reference key="10">
    <citation type="journal article" date="2011" name="BMC Syst. Biol.">
        <title>Initial characterization of the human central proteome.</title>
        <authorList>
            <person name="Burkard T.R."/>
            <person name="Planyavsky M."/>
            <person name="Kaupe I."/>
            <person name="Breitwieser F.P."/>
            <person name="Buerckstuemmer T."/>
            <person name="Bennett K.L."/>
            <person name="Superti-Furga G."/>
            <person name="Colinge J."/>
        </authorList>
    </citation>
    <scope>IDENTIFICATION BY MASS SPECTROMETRY [LARGE SCALE ANALYSIS]</scope>
</reference>
<accession>Q9P2W1</accession>
<accession>C5ILB7</accession>
<accession>Q14458</accession>
<accession>Q8WXG2</accession>
<accession>Q96HA2</accession>
<keyword id="KW-0025">Alternative splicing</keyword>
<keyword id="KW-0175">Coiled coil</keyword>
<keyword id="KW-0225">Disease variant</keyword>
<keyword id="KW-0233">DNA recombination</keyword>
<keyword id="KW-0238">DNA-binding</keyword>
<keyword id="KW-0469">Meiosis</keyword>
<keyword id="KW-0539">Nucleus</keyword>
<keyword id="KW-0597">Phosphoprotein</keyword>
<keyword id="KW-1267">Proteomics identification</keyword>
<keyword id="KW-1185">Reference proteome</keyword>
<dbReference type="EMBL" id="L38933">
    <property type="protein sequence ID" value="AAC41915.1"/>
    <property type="status" value="ALT_FRAME"/>
    <property type="molecule type" value="mRNA"/>
</dbReference>
<dbReference type="EMBL" id="AB030304">
    <property type="protein sequence ID" value="BAA92872.1"/>
    <property type="molecule type" value="mRNA"/>
</dbReference>
<dbReference type="EMBL" id="AF440240">
    <property type="protein sequence ID" value="AAL33609.1"/>
    <property type="molecule type" value="mRNA"/>
</dbReference>
<dbReference type="EMBL" id="FJ952180">
    <property type="protein sequence ID" value="ACR46655.1"/>
    <property type="molecule type" value="mRNA"/>
</dbReference>
<dbReference type="EMBL" id="FJ952181">
    <property type="protein sequence ID" value="ACR46656.1"/>
    <property type="molecule type" value="mRNA"/>
</dbReference>
<dbReference type="EMBL" id="FJ952182">
    <property type="protein sequence ID" value="ACR46657.1"/>
    <property type="molecule type" value="mRNA"/>
</dbReference>
<dbReference type="EMBL" id="FJ952183">
    <property type="protein sequence ID" value="ACR46658.1"/>
    <property type="molecule type" value="mRNA"/>
</dbReference>
<dbReference type="EMBL" id="GQ851964">
    <property type="protein sequence ID" value="ACX30903.1"/>
    <property type="molecule type" value="mRNA"/>
</dbReference>
<dbReference type="EMBL" id="GQ851965">
    <property type="protein sequence ID" value="ACX30904.1"/>
    <property type="molecule type" value="mRNA"/>
</dbReference>
<dbReference type="EMBL" id="AC067852">
    <property type="status" value="NOT_ANNOTATED_CDS"/>
    <property type="molecule type" value="Genomic_DNA"/>
</dbReference>
<dbReference type="EMBL" id="BC008792">
    <property type="protein sequence ID" value="AAH08792.1"/>
    <property type="molecule type" value="mRNA"/>
</dbReference>
<dbReference type="CCDS" id="CCDS11431.1">
    <molecule id="Q9P2W1-2"/>
</dbReference>
<dbReference type="CCDS" id="CCDS45688.1">
    <molecule id="Q9P2W1-1"/>
</dbReference>
<dbReference type="PIR" id="I68521">
    <property type="entry name" value="I68521"/>
</dbReference>
<dbReference type="RefSeq" id="NP_001242943.1">
    <property type="nucleotide sequence ID" value="NM_001256014.1"/>
</dbReference>
<dbReference type="RefSeq" id="NP_001242944.1">
    <property type="nucleotide sequence ID" value="NM_001256015.1"/>
</dbReference>
<dbReference type="RefSeq" id="NP_001242945.1">
    <property type="nucleotide sequence ID" value="NM_001256016.1"/>
</dbReference>
<dbReference type="RefSeq" id="NP_037422.2">
    <molecule id="Q9P2W1-2"/>
    <property type="nucleotide sequence ID" value="NM_013290.6"/>
</dbReference>
<dbReference type="RefSeq" id="NP_057640.1">
    <molecule id="Q9P2W1-1"/>
    <property type="nucleotide sequence ID" value="NM_016556.4"/>
</dbReference>
<dbReference type="SMR" id="Q9P2W1"/>
<dbReference type="BioGRID" id="118945">
    <property type="interactions" value="42"/>
</dbReference>
<dbReference type="ComplexPortal" id="CPX-6661">
    <property type="entry name" value="HOP2-MND1 recombination assembly factor complex"/>
</dbReference>
<dbReference type="CORUM" id="Q9P2W1"/>
<dbReference type="FunCoup" id="Q9P2W1">
    <property type="interactions" value="986"/>
</dbReference>
<dbReference type="IntAct" id="Q9P2W1">
    <property type="interactions" value="24"/>
</dbReference>
<dbReference type="MINT" id="Q9P2W1"/>
<dbReference type="STRING" id="9606.ENSP00000377384"/>
<dbReference type="GlyGen" id="Q9P2W1">
    <property type="glycosylation" value="1 site, 1 O-linked glycan (1 site)"/>
</dbReference>
<dbReference type="iPTMnet" id="Q9P2W1"/>
<dbReference type="PhosphoSitePlus" id="Q9P2W1"/>
<dbReference type="BioMuta" id="PSMC3IP"/>
<dbReference type="DMDM" id="74719969"/>
<dbReference type="jPOST" id="Q9P2W1"/>
<dbReference type="MassIVE" id="Q9P2W1"/>
<dbReference type="PaxDb" id="9606-ENSP00000377384"/>
<dbReference type="PeptideAtlas" id="Q9P2W1"/>
<dbReference type="ProteomicsDB" id="83901">
    <molecule id="Q9P2W1-1"/>
</dbReference>
<dbReference type="ProteomicsDB" id="83902">
    <molecule id="Q9P2W1-2"/>
</dbReference>
<dbReference type="Pumba" id="Q9P2W1"/>
<dbReference type="Antibodypedia" id="29297">
    <property type="antibodies" value="68 antibodies from 21 providers"/>
</dbReference>
<dbReference type="DNASU" id="29893"/>
<dbReference type="Ensembl" id="ENST00000253789.9">
    <molecule id="Q9P2W1-2"/>
    <property type="protein sequence ID" value="ENSP00000253789.4"/>
    <property type="gene ID" value="ENSG00000131470.15"/>
</dbReference>
<dbReference type="Ensembl" id="ENST00000393795.8">
    <molecule id="Q9P2W1-1"/>
    <property type="protein sequence ID" value="ENSP00000377384.2"/>
    <property type="gene ID" value="ENSG00000131470.15"/>
</dbReference>
<dbReference type="Ensembl" id="ENST00000590760.5">
    <molecule id="Q9P2W1-3"/>
    <property type="protein sequence ID" value="ENSP00000466381.1"/>
    <property type="gene ID" value="ENSG00000131470.15"/>
</dbReference>
<dbReference type="GeneID" id="29893"/>
<dbReference type="KEGG" id="hsa:29893"/>
<dbReference type="MANE-Select" id="ENST00000393795.8">
    <property type="protein sequence ID" value="ENSP00000377384.2"/>
    <property type="RefSeq nucleotide sequence ID" value="NM_016556.4"/>
    <property type="RefSeq protein sequence ID" value="NP_057640.1"/>
</dbReference>
<dbReference type="UCSC" id="uc002iai.4">
    <molecule id="Q9P2W1-1"/>
    <property type="organism name" value="human"/>
</dbReference>
<dbReference type="AGR" id="HGNC:17928"/>
<dbReference type="CTD" id="29893"/>
<dbReference type="DisGeNET" id="29893"/>
<dbReference type="GeneCards" id="PSMC3IP"/>
<dbReference type="HGNC" id="HGNC:17928">
    <property type="gene designation" value="PSMC3IP"/>
</dbReference>
<dbReference type="HPA" id="ENSG00000131470">
    <property type="expression patterns" value="Tissue enhanced (testis)"/>
</dbReference>
<dbReference type="MalaCards" id="PSMC3IP"/>
<dbReference type="MIM" id="608665">
    <property type="type" value="gene"/>
</dbReference>
<dbReference type="MIM" id="614324">
    <property type="type" value="phenotype"/>
</dbReference>
<dbReference type="neXtProt" id="NX_Q9P2W1"/>
<dbReference type="OpenTargets" id="ENSG00000131470"/>
<dbReference type="Orphanet" id="243">
    <property type="disease" value="46,XX gonadal dysgenesis"/>
</dbReference>
<dbReference type="PharmGKB" id="PA143485584"/>
<dbReference type="VEuPathDB" id="HostDB:ENSG00000131470"/>
<dbReference type="eggNOG" id="KOG4603">
    <property type="taxonomic scope" value="Eukaryota"/>
</dbReference>
<dbReference type="GeneTree" id="ENSGT00390000006890"/>
<dbReference type="HOGENOM" id="CLU_181023_0_0_1"/>
<dbReference type="InParanoid" id="Q9P2W1"/>
<dbReference type="OMA" id="QKYHREW"/>
<dbReference type="OrthoDB" id="272266at2759"/>
<dbReference type="PAN-GO" id="Q9P2W1">
    <property type="GO annotations" value="7 GO annotations based on evolutionary models"/>
</dbReference>
<dbReference type="PhylomeDB" id="Q9P2W1"/>
<dbReference type="TreeFam" id="TF328666"/>
<dbReference type="PathwayCommons" id="Q9P2W1"/>
<dbReference type="Reactome" id="R-HSA-912446">
    <property type="pathway name" value="Meiotic recombination"/>
</dbReference>
<dbReference type="SignaLink" id="Q9P2W1"/>
<dbReference type="BioGRID-ORCS" id="29893">
    <property type="hits" value="36 hits in 1161 CRISPR screens"/>
</dbReference>
<dbReference type="CD-CODE" id="91857CE7">
    <property type="entry name" value="Nucleolus"/>
</dbReference>
<dbReference type="ChiTaRS" id="PSMC3IP">
    <property type="organism name" value="human"/>
</dbReference>
<dbReference type="GenomeRNAi" id="29893"/>
<dbReference type="Pharos" id="Q9P2W1">
    <property type="development level" value="Tbio"/>
</dbReference>
<dbReference type="PRO" id="PR:Q9P2W1"/>
<dbReference type="Proteomes" id="UP000005640">
    <property type="component" value="Chromosome 17"/>
</dbReference>
<dbReference type="RNAct" id="Q9P2W1">
    <property type="molecule type" value="protein"/>
</dbReference>
<dbReference type="Bgee" id="ENSG00000131470">
    <property type="expression patterns" value="Expressed in tendon of biceps brachii and 190 other cell types or tissues"/>
</dbReference>
<dbReference type="ExpressionAtlas" id="Q9P2W1">
    <property type="expression patterns" value="baseline and differential"/>
</dbReference>
<dbReference type="GO" id="GO:0000794">
    <property type="term" value="C:condensed nuclear chromosome"/>
    <property type="evidence" value="ECO:0000318"/>
    <property type="project" value="GO_Central"/>
</dbReference>
<dbReference type="GO" id="GO:0120231">
    <property type="term" value="C:DNA recombinase auxiliary factor complex"/>
    <property type="evidence" value="ECO:0000318"/>
    <property type="project" value="GO_Central"/>
</dbReference>
<dbReference type="GO" id="GO:0005654">
    <property type="term" value="C:nucleoplasm"/>
    <property type="evidence" value="ECO:0000314"/>
    <property type="project" value="HPA"/>
</dbReference>
<dbReference type="GO" id="GO:0003690">
    <property type="term" value="F:double-stranded DNA binding"/>
    <property type="evidence" value="ECO:0000318"/>
    <property type="project" value="GO_Central"/>
</dbReference>
<dbReference type="GO" id="GO:0120230">
    <property type="term" value="F:recombinase activator activity"/>
    <property type="evidence" value="ECO:0000318"/>
    <property type="project" value="GO_Central"/>
</dbReference>
<dbReference type="GO" id="GO:0003713">
    <property type="term" value="F:transcription coactivator activity"/>
    <property type="evidence" value="ECO:0000315"/>
    <property type="project" value="UniProtKB"/>
</dbReference>
<dbReference type="GO" id="GO:0007129">
    <property type="term" value="P:homologous chromosome pairing at meiosis"/>
    <property type="evidence" value="ECO:0000314"/>
    <property type="project" value="ComplexPortal"/>
</dbReference>
<dbReference type="GO" id="GO:0000709">
    <property type="term" value="P:meiotic joint molecule formation"/>
    <property type="evidence" value="ECO:0000318"/>
    <property type="project" value="GO_Central"/>
</dbReference>
<dbReference type="GO" id="GO:0010774">
    <property type="term" value="P:meiotic strand invasion involved in reciprocal meiotic recombination"/>
    <property type="evidence" value="ECO:0000318"/>
    <property type="project" value="GO_Central"/>
</dbReference>
<dbReference type="GO" id="GO:0007131">
    <property type="term" value="P:reciprocal meiotic recombination"/>
    <property type="evidence" value="ECO:0000314"/>
    <property type="project" value="ComplexPortal"/>
</dbReference>
<dbReference type="FunFam" id="1.10.10.10:FF:000394">
    <property type="entry name" value="Homologous-pairing protein 2 homolog"/>
    <property type="match status" value="1"/>
</dbReference>
<dbReference type="Gene3D" id="1.10.10.10">
    <property type="entry name" value="Winged helix-like DNA-binding domain superfamily/Winged helix DNA-binding domain"/>
    <property type="match status" value="1"/>
</dbReference>
<dbReference type="InterPro" id="IPR010776">
    <property type="entry name" value="Hop2_WH_dom"/>
</dbReference>
<dbReference type="InterPro" id="IPR040661">
    <property type="entry name" value="LZ3wCH"/>
</dbReference>
<dbReference type="InterPro" id="IPR036388">
    <property type="entry name" value="WH-like_DNA-bd_sf"/>
</dbReference>
<dbReference type="PANTHER" id="PTHR15938:SF0">
    <property type="entry name" value="HOMOLOGOUS-PAIRING PROTEIN 2 HOMOLOG"/>
    <property type="match status" value="1"/>
</dbReference>
<dbReference type="PANTHER" id="PTHR15938">
    <property type="entry name" value="TBP-1 INTERACTING PROTEIN"/>
    <property type="match status" value="1"/>
</dbReference>
<dbReference type="Pfam" id="PF18517">
    <property type="entry name" value="LZ3wCH"/>
    <property type="match status" value="1"/>
</dbReference>
<dbReference type="Pfam" id="PF07106">
    <property type="entry name" value="TBPIP"/>
    <property type="match status" value="1"/>
</dbReference>
<organism>
    <name type="scientific">Homo sapiens</name>
    <name type="common">Human</name>
    <dbReference type="NCBI Taxonomy" id="9606"/>
    <lineage>
        <taxon>Eukaryota</taxon>
        <taxon>Metazoa</taxon>
        <taxon>Chordata</taxon>
        <taxon>Craniata</taxon>
        <taxon>Vertebrata</taxon>
        <taxon>Euteleostomi</taxon>
        <taxon>Mammalia</taxon>
        <taxon>Eutheria</taxon>
        <taxon>Euarchontoglires</taxon>
        <taxon>Primates</taxon>
        <taxon>Haplorrhini</taxon>
        <taxon>Catarrhini</taxon>
        <taxon>Hominidae</taxon>
        <taxon>Homo</taxon>
    </lineage>
</organism>
<feature type="chain" id="PRO_0000314135" description="Homologous-pairing protein 2 homolog">
    <location>
        <begin position="1"/>
        <end position="217"/>
    </location>
</feature>
<feature type="region of interest" description="DNA-binding" evidence="1">
    <location>
        <begin position="118"/>
        <end position="182"/>
    </location>
</feature>
<feature type="coiled-coil region" evidence="2">
    <location>
        <begin position="93"/>
        <end position="153"/>
    </location>
</feature>
<feature type="splice variant" id="VSP_047716" description="In isoform 3." evidence="10">
    <location>
        <begin position="1"/>
        <end position="125"/>
    </location>
</feature>
<feature type="splice variant" id="VSP_030213" description="In isoform 2." evidence="9">
    <location>
        <begin position="113"/>
        <end position="124"/>
    </location>
</feature>
<feature type="sequence variant" id="VAR_037841" description="In dbSNP:rs2292754.">
    <original>Y</original>
    <variation>N</variation>
    <location>
        <position position="163"/>
    </location>
</feature>
<feature type="sequence variant" id="VAR_066636" description="In ODG3; impairs function as estrogen receptor coactivator." evidence="7">
    <location>
        <position position="201"/>
    </location>
</feature>
<feature type="sequence conflict" description="In Ref. 1; AAC41915." evidence="11" ref="1">
    <location>
        <position position="8"/>
    </location>
</feature>
<feature type="sequence conflict" description="In Ref. 1; AAC41915 and 5; AAL33609." evidence="11" ref="1 5">
    <original>S</original>
    <variation>T</variation>
    <location>
        <position position="106"/>
    </location>
</feature>
<feature type="sequence conflict" description="In Ref. 5; AAL33609." evidence="11" ref="5">
    <original>S</original>
    <variation>L</variation>
    <location>
        <position position="184"/>
    </location>
</feature>
<name>HOP2_HUMAN</name>